<reference key="1">
    <citation type="journal article" date="1991" name="Mol. Gen. Genet.">
        <title>The Mycobacterium tuberculosis shikimate pathway genes: evolutionary relationship between biosynthetic and catabolic 3-dehydroquinases.</title>
        <authorList>
            <person name="Garbe T."/>
            <person name="Servos S."/>
            <person name="Hawkins A."/>
            <person name="Dimitriadis G."/>
            <person name="Young D."/>
            <person name="Dougan G."/>
            <person name="Charles I.G."/>
        </authorList>
    </citation>
    <scope>NUCLEOTIDE SEQUENCE [GENOMIC DNA]</scope>
    <source>
        <strain>ATCC 25618 / H37Rv</strain>
    </source>
</reference>
<reference key="2">
    <citation type="journal article" date="1998" name="Nature">
        <title>Deciphering the biology of Mycobacterium tuberculosis from the complete genome sequence.</title>
        <authorList>
            <person name="Cole S.T."/>
            <person name="Brosch R."/>
            <person name="Parkhill J."/>
            <person name="Garnier T."/>
            <person name="Churcher C.M."/>
            <person name="Harris D.E."/>
            <person name="Gordon S.V."/>
            <person name="Eiglmeier K."/>
            <person name="Gas S."/>
            <person name="Barry C.E. III"/>
            <person name="Tekaia F."/>
            <person name="Badcock K."/>
            <person name="Basham D."/>
            <person name="Brown D."/>
            <person name="Chillingworth T."/>
            <person name="Connor R."/>
            <person name="Davies R.M."/>
            <person name="Devlin K."/>
            <person name="Feltwell T."/>
            <person name="Gentles S."/>
            <person name="Hamlin N."/>
            <person name="Holroyd S."/>
            <person name="Hornsby T."/>
            <person name="Jagels K."/>
            <person name="Krogh A."/>
            <person name="McLean J."/>
            <person name="Moule S."/>
            <person name="Murphy L.D."/>
            <person name="Oliver S."/>
            <person name="Osborne J."/>
            <person name="Quail M.A."/>
            <person name="Rajandream M.A."/>
            <person name="Rogers J."/>
            <person name="Rutter S."/>
            <person name="Seeger K."/>
            <person name="Skelton S."/>
            <person name="Squares S."/>
            <person name="Squares R."/>
            <person name="Sulston J.E."/>
            <person name="Taylor K."/>
            <person name="Whitehead S."/>
            <person name="Barrell B.G."/>
        </authorList>
    </citation>
    <scope>NUCLEOTIDE SEQUENCE [LARGE SCALE GENOMIC DNA]</scope>
    <source>
        <strain>ATCC 25618 / H37Rv</strain>
    </source>
</reference>
<reference key="3">
    <citation type="journal article" date="2008" name="BMC Syst. Biol.">
        <title>targetTB: a target identification pipeline for Mycobacterium tuberculosis through an interactome, reactome and genome-scale structural analysis.</title>
        <authorList>
            <person name="Raman K."/>
            <person name="Yeturu K."/>
            <person name="Chandra N."/>
        </authorList>
    </citation>
    <scope>IDENTIFICATION AS A DRUG TARGET [LARGE SCALE ANALYSIS]</scope>
</reference>
<reference key="4">
    <citation type="journal article" date="2011" name="Mol. Cell. Proteomics">
        <title>Proteogenomic analysis of Mycobacterium tuberculosis by high resolution mass spectrometry.</title>
        <authorList>
            <person name="Kelkar D.S."/>
            <person name="Kumar D."/>
            <person name="Kumar P."/>
            <person name="Balakrishnan L."/>
            <person name="Muthusamy B."/>
            <person name="Yadav A.K."/>
            <person name="Shrivastava P."/>
            <person name="Marimuthu A."/>
            <person name="Anand S."/>
            <person name="Sundaram H."/>
            <person name="Kingsbury R."/>
            <person name="Harsha H.C."/>
            <person name="Nair B."/>
            <person name="Prasad T.S."/>
            <person name="Chauhan D.S."/>
            <person name="Katoch K."/>
            <person name="Katoch V.M."/>
            <person name="Kumar P."/>
            <person name="Chaerkady R."/>
            <person name="Ramachandran S."/>
            <person name="Dash D."/>
            <person name="Pandey A."/>
        </authorList>
    </citation>
    <scope>IDENTIFICATION BY MASS SPECTROMETRY [LARGE SCALE ANALYSIS]</scope>
    <source>
        <strain>ATCC 25618 / H37Rv</strain>
    </source>
</reference>
<reference evidence="5" key="5">
    <citation type="submission" date="2011-01" db="PDB data bank">
        <title>3-dehydroquinate synthase (aroB) from Mycobacterium tuberculosis in complex with NAD.</title>
        <authorList>
            <person name="Cheng W.C."/>
            <person name="Chen T.J."/>
            <person name="Wang W.C."/>
        </authorList>
    </citation>
    <scope>X-RAY CRYSTALLOGRAPHY (2.47 ANGSTROMS) IN COMPLEX WITH NAD</scope>
</reference>
<reference evidence="6" key="6">
    <citation type="submission" date="2011-01" db="PDB data bank">
        <title>Crystal structure of the 3-dehydroquinate synthase (aroB) from Mycobacterium tuberculosis.</title>
        <authorList>
            <person name="Cheng W.C."/>
            <person name="Chen T.J."/>
            <person name="Wang W.C."/>
        </authorList>
    </citation>
    <scope>X-RAY CRYSTALLOGRAPHY (2.07 ANGSTROMS) IN COMPLEX WITH ZINC</scope>
</reference>
<name>AROB_MYCTU</name>
<accession>P9WPX9</accession>
<accession>L0TCN7</accession>
<accession>P0A4Z4</accession>
<accession>P36919</accession>
<accession>P95015</accession>
<sequence>MTDIGAPVTVQVAVDPPYPVVIGTGLLDELEDLLADRHKVAVVHQPGLAETAEEIRKRLAGKGVDAHRIEIPDAEAGKDLPVVGFIWEVLGRIGIGRKDALVSLGGGAATDVAGFAAATWLRGVSIVHLPTTLLGMVDAAVGGKTGINTDAGKNLVGAFHQPLAVLVDLATLQTLPRDEMICGMAEVVKAGFIADPVILDLIEADPQAALDPAGDVLPELIRRAITVKAEVVAADEKESELREILNYGHTLGHAIERRERYRWRHGAAVSVGLVFAAELARLAGRLDDATAQRHRTILSSLGLPVSYDPDALPQLLEIMAGDKKTRAGVLRFVVLDGLAKPGRMVGPDPGLLVTAYAGVCAP</sequence>
<feature type="chain" id="PRO_0000140757" description="3-dehydroquinate synthase">
    <location>
        <begin position="1"/>
        <end position="362"/>
    </location>
</feature>
<feature type="binding site" evidence="3 5">
    <location>
        <position position="45"/>
    </location>
    <ligand>
        <name>NAD(+)</name>
        <dbReference type="ChEBI" id="CHEBI:57540"/>
    </ligand>
</feature>
<feature type="binding site" evidence="2 3 5">
    <location>
        <begin position="73"/>
        <end position="78"/>
    </location>
    <ligand>
        <name>NAD(+)</name>
        <dbReference type="ChEBI" id="CHEBI:57540"/>
    </ligand>
</feature>
<feature type="binding site" evidence="2 3 5">
    <location>
        <begin position="107"/>
        <end position="111"/>
    </location>
    <ligand>
        <name>NAD(+)</name>
        <dbReference type="ChEBI" id="CHEBI:57540"/>
    </ligand>
</feature>
<feature type="binding site" evidence="2 3 5">
    <location>
        <begin position="131"/>
        <end position="132"/>
    </location>
    <ligand>
        <name>NAD(+)</name>
        <dbReference type="ChEBI" id="CHEBI:57540"/>
    </ligand>
</feature>
<feature type="binding site" evidence="2 3 5">
    <location>
        <position position="144"/>
    </location>
    <ligand>
        <name>NAD(+)</name>
        <dbReference type="ChEBI" id="CHEBI:57540"/>
    </ligand>
</feature>
<feature type="binding site" evidence="1 2">
    <location>
        <position position="153"/>
    </location>
    <ligand>
        <name>NAD(+)</name>
        <dbReference type="ChEBI" id="CHEBI:57540"/>
    </ligand>
</feature>
<feature type="binding site" evidence="2 3 5">
    <location>
        <begin position="171"/>
        <end position="174"/>
    </location>
    <ligand>
        <name>NAD(+)</name>
        <dbReference type="ChEBI" id="CHEBI:57540"/>
    </ligand>
</feature>
<feature type="binding site" evidence="2 6">
    <location>
        <position position="186"/>
    </location>
    <ligand>
        <name>Zn(2+)</name>
        <dbReference type="ChEBI" id="CHEBI:29105"/>
    </ligand>
</feature>
<feature type="binding site" evidence="2 6">
    <location>
        <position position="249"/>
    </location>
    <ligand>
        <name>Zn(2+)</name>
        <dbReference type="ChEBI" id="CHEBI:29105"/>
    </ligand>
</feature>
<feature type="binding site" evidence="2 6">
    <location>
        <position position="265"/>
    </location>
    <ligand>
        <name>Zn(2+)</name>
        <dbReference type="ChEBI" id="CHEBI:29105"/>
    </ligand>
</feature>
<feature type="sequence conflict" description="In Ref. 1; CAA42095." evidence="4" ref="1">
    <original>D</original>
    <variation>N</variation>
    <location>
        <position position="99"/>
    </location>
</feature>
<feature type="strand" evidence="8">
    <location>
        <begin position="8"/>
        <end position="12"/>
    </location>
</feature>
<feature type="strand" evidence="8">
    <location>
        <begin position="14"/>
        <end position="16"/>
    </location>
</feature>
<feature type="strand" evidence="8">
    <location>
        <begin position="18"/>
        <end position="24"/>
    </location>
</feature>
<feature type="helix" evidence="8">
    <location>
        <begin position="27"/>
        <end position="34"/>
    </location>
</feature>
<feature type="strand" evidence="8">
    <location>
        <begin position="38"/>
        <end position="44"/>
    </location>
</feature>
<feature type="helix" evidence="8">
    <location>
        <begin position="46"/>
        <end position="48"/>
    </location>
</feature>
<feature type="helix" evidence="8">
    <location>
        <begin position="49"/>
        <end position="61"/>
    </location>
</feature>
<feature type="strand" evidence="8">
    <location>
        <begin position="65"/>
        <end position="70"/>
    </location>
</feature>
<feature type="helix" evidence="8">
    <location>
        <begin position="74"/>
        <end position="78"/>
    </location>
</feature>
<feature type="helix" evidence="8">
    <location>
        <begin position="80"/>
        <end position="93"/>
    </location>
</feature>
<feature type="strand" evidence="8">
    <location>
        <begin position="100"/>
        <end position="106"/>
    </location>
</feature>
<feature type="helix" evidence="8">
    <location>
        <begin position="107"/>
        <end position="119"/>
    </location>
</feature>
<feature type="helix" evidence="8">
    <location>
        <begin position="120"/>
        <end position="122"/>
    </location>
</feature>
<feature type="strand" evidence="8">
    <location>
        <begin position="125"/>
        <end position="130"/>
    </location>
</feature>
<feature type="helix" evidence="8">
    <location>
        <begin position="133"/>
        <end position="137"/>
    </location>
</feature>
<feature type="turn" evidence="8">
    <location>
        <begin position="138"/>
        <end position="140"/>
    </location>
</feature>
<feature type="strand" evidence="8">
    <location>
        <begin position="144"/>
        <end position="149"/>
    </location>
</feature>
<feature type="strand" evidence="8">
    <location>
        <begin position="152"/>
        <end position="159"/>
    </location>
</feature>
<feature type="strand" evidence="8">
    <location>
        <begin position="163"/>
        <end position="168"/>
    </location>
</feature>
<feature type="helix" evidence="8">
    <location>
        <begin position="169"/>
        <end position="174"/>
    </location>
</feature>
<feature type="helix" evidence="8">
    <location>
        <begin position="177"/>
        <end position="193"/>
    </location>
</feature>
<feature type="helix" evidence="8">
    <location>
        <begin position="196"/>
        <end position="204"/>
    </location>
</feature>
<feature type="helix" evidence="8">
    <location>
        <begin position="206"/>
        <end position="209"/>
    </location>
</feature>
<feature type="strand" evidence="7">
    <location>
        <begin position="212"/>
        <end position="215"/>
    </location>
</feature>
<feature type="helix" evidence="8">
    <location>
        <begin position="216"/>
        <end position="233"/>
    </location>
</feature>
<feature type="helix" evidence="8">
    <location>
        <begin position="241"/>
        <end position="246"/>
    </location>
</feature>
<feature type="helix" evidence="8">
    <location>
        <begin position="249"/>
        <end position="258"/>
    </location>
</feature>
<feature type="turn" evidence="8">
    <location>
        <begin position="259"/>
        <end position="261"/>
    </location>
</feature>
<feature type="helix" evidence="8">
    <location>
        <begin position="265"/>
        <end position="282"/>
    </location>
</feature>
<feature type="helix" evidence="8">
    <location>
        <begin position="288"/>
        <end position="300"/>
    </location>
</feature>
<feature type="helix" evidence="8">
    <location>
        <begin position="312"/>
        <end position="320"/>
    </location>
</feature>
<feature type="strand" evidence="8">
    <location>
        <begin position="331"/>
        <end position="337"/>
    </location>
</feature>
<feature type="strand" evidence="8">
    <location>
        <begin position="341"/>
        <end position="346"/>
    </location>
</feature>
<feature type="helix" evidence="8">
    <location>
        <begin position="349"/>
        <end position="360"/>
    </location>
</feature>
<protein>
    <recommendedName>
        <fullName evidence="2">3-dehydroquinate synthase</fullName>
        <shortName evidence="2">DHQS</shortName>
        <ecNumber evidence="2">4.2.3.4</ecNumber>
    </recommendedName>
</protein>
<proteinExistence type="evidence at protein level"/>
<comment type="function">
    <text evidence="2">Catalyzes the conversion of 3-deoxy-D-arabino-heptulosonate 7-phosphate (DAHP) to dehydroquinate (DHQ).</text>
</comment>
<comment type="catalytic activity">
    <reaction evidence="2">
        <text>7-phospho-2-dehydro-3-deoxy-D-arabino-heptonate = 3-dehydroquinate + phosphate</text>
        <dbReference type="Rhea" id="RHEA:21968"/>
        <dbReference type="ChEBI" id="CHEBI:32364"/>
        <dbReference type="ChEBI" id="CHEBI:43474"/>
        <dbReference type="ChEBI" id="CHEBI:58394"/>
        <dbReference type="EC" id="4.2.3.4"/>
    </reaction>
</comment>
<comment type="cofactor">
    <cofactor evidence="2">
        <name>NAD(+)</name>
        <dbReference type="ChEBI" id="CHEBI:57540"/>
    </cofactor>
</comment>
<comment type="cofactor">
    <cofactor evidence="2">
        <name>Co(2+)</name>
        <dbReference type="ChEBI" id="CHEBI:48828"/>
    </cofactor>
    <cofactor evidence="2">
        <name>Zn(2+)</name>
        <dbReference type="ChEBI" id="CHEBI:29105"/>
    </cofactor>
    <text evidence="2">Binds 1 divalent metal cation per subunit. Can use either Co(2+) or Zn(2+).</text>
</comment>
<comment type="pathway">
    <text evidence="2">Metabolic intermediate biosynthesis; chorismate biosynthesis; chorismate from D-erythrose 4-phosphate and phosphoenolpyruvate: step 2/7.</text>
</comment>
<comment type="subcellular location">
    <subcellularLocation>
        <location evidence="2">Cytoplasm</location>
    </subcellularLocation>
</comment>
<comment type="miscellaneous">
    <text>Was identified as a high-confidence drug target.</text>
</comment>
<comment type="similarity">
    <text evidence="2 4">Belongs to the sugar phosphate cyclases superfamily. Dehydroquinate synthase family.</text>
</comment>
<organism>
    <name type="scientific">Mycobacterium tuberculosis (strain ATCC 25618 / H37Rv)</name>
    <dbReference type="NCBI Taxonomy" id="83332"/>
    <lineage>
        <taxon>Bacteria</taxon>
        <taxon>Bacillati</taxon>
        <taxon>Actinomycetota</taxon>
        <taxon>Actinomycetes</taxon>
        <taxon>Mycobacteriales</taxon>
        <taxon>Mycobacteriaceae</taxon>
        <taxon>Mycobacterium</taxon>
        <taxon>Mycobacterium tuberculosis complex</taxon>
    </lineage>
</organism>
<evidence type="ECO:0000250" key="1">
    <source>
        <dbReference type="UniProtKB" id="Q6GGU4"/>
    </source>
</evidence>
<evidence type="ECO:0000255" key="2">
    <source>
        <dbReference type="HAMAP-Rule" id="MF_00110"/>
    </source>
</evidence>
<evidence type="ECO:0000269" key="3">
    <source ref="5"/>
</evidence>
<evidence type="ECO:0000305" key="4"/>
<evidence type="ECO:0007744" key="5">
    <source>
        <dbReference type="PDB" id="3QBD"/>
    </source>
</evidence>
<evidence type="ECO:0007744" key="6">
    <source>
        <dbReference type="PDB" id="3QBE"/>
    </source>
</evidence>
<evidence type="ECO:0007829" key="7">
    <source>
        <dbReference type="PDB" id="3QBD"/>
    </source>
</evidence>
<evidence type="ECO:0007829" key="8">
    <source>
        <dbReference type="PDB" id="3QBE"/>
    </source>
</evidence>
<gene>
    <name evidence="2" type="primary">aroB</name>
    <name type="ordered locus">Rv2538c</name>
    <name type="ORF">MTCY159.18</name>
</gene>
<keyword id="KW-0002">3D-structure</keyword>
<keyword id="KW-0028">Amino-acid biosynthesis</keyword>
<keyword id="KW-0057">Aromatic amino acid biosynthesis</keyword>
<keyword id="KW-0170">Cobalt</keyword>
<keyword id="KW-0963">Cytoplasm</keyword>
<keyword id="KW-0456">Lyase</keyword>
<keyword id="KW-0479">Metal-binding</keyword>
<keyword id="KW-0520">NAD</keyword>
<keyword id="KW-0547">Nucleotide-binding</keyword>
<keyword id="KW-1185">Reference proteome</keyword>
<keyword id="KW-0862">Zinc</keyword>
<dbReference type="EC" id="4.2.3.4" evidence="2"/>
<dbReference type="EMBL" id="X59509">
    <property type="protein sequence ID" value="CAA42095.1"/>
    <property type="molecule type" value="Genomic_DNA"/>
</dbReference>
<dbReference type="EMBL" id="AL123456">
    <property type="protein sequence ID" value="CCP45333.1"/>
    <property type="molecule type" value="Genomic_DNA"/>
</dbReference>
<dbReference type="PIR" id="S17768">
    <property type="entry name" value="S17768"/>
</dbReference>
<dbReference type="RefSeq" id="NP_217054.1">
    <property type="nucleotide sequence ID" value="NC_000962.3"/>
</dbReference>
<dbReference type="RefSeq" id="WP_003413008.1">
    <property type="nucleotide sequence ID" value="NZ_NVQJ01000032.1"/>
</dbReference>
<dbReference type="PDB" id="3QBD">
    <property type="method" value="X-ray"/>
    <property type="resolution" value="2.47 A"/>
    <property type="chains" value="A/B=1-362"/>
</dbReference>
<dbReference type="PDB" id="3QBE">
    <property type="method" value="X-ray"/>
    <property type="resolution" value="2.07 A"/>
    <property type="chains" value="A=1-362"/>
</dbReference>
<dbReference type="PDBsum" id="3QBD"/>
<dbReference type="PDBsum" id="3QBE"/>
<dbReference type="SMR" id="P9WPX9"/>
<dbReference type="FunCoup" id="P9WPX9">
    <property type="interactions" value="356"/>
</dbReference>
<dbReference type="STRING" id="83332.Rv2538c"/>
<dbReference type="PaxDb" id="83332-Rv2538c"/>
<dbReference type="DNASU" id="888392"/>
<dbReference type="GeneID" id="888392"/>
<dbReference type="KEGG" id="mtu:Rv2538c"/>
<dbReference type="KEGG" id="mtv:RVBD_2538c"/>
<dbReference type="TubercuList" id="Rv2538c"/>
<dbReference type="eggNOG" id="COG0337">
    <property type="taxonomic scope" value="Bacteria"/>
</dbReference>
<dbReference type="InParanoid" id="P9WPX9"/>
<dbReference type="OrthoDB" id="9806583at2"/>
<dbReference type="PhylomeDB" id="P9WPX9"/>
<dbReference type="BRENDA" id="4.2.3.4">
    <property type="organism ID" value="3445"/>
</dbReference>
<dbReference type="Reactome" id="R-MTU-964903">
    <property type="pathway name" value="Chorismate via Shikimate Pathway"/>
</dbReference>
<dbReference type="UniPathway" id="UPA00053">
    <property type="reaction ID" value="UER00085"/>
</dbReference>
<dbReference type="EvolutionaryTrace" id="P9WPX9"/>
<dbReference type="Proteomes" id="UP000001584">
    <property type="component" value="Chromosome"/>
</dbReference>
<dbReference type="GO" id="GO:0005829">
    <property type="term" value="C:cytosol"/>
    <property type="evidence" value="ECO:0000304"/>
    <property type="project" value="Reactome"/>
</dbReference>
<dbReference type="GO" id="GO:0009274">
    <property type="term" value="C:peptidoglycan-based cell wall"/>
    <property type="evidence" value="ECO:0007005"/>
    <property type="project" value="MTBBASE"/>
</dbReference>
<dbReference type="GO" id="GO:0005886">
    <property type="term" value="C:plasma membrane"/>
    <property type="evidence" value="ECO:0007005"/>
    <property type="project" value="MTBBASE"/>
</dbReference>
<dbReference type="GO" id="GO:0003856">
    <property type="term" value="F:3-dehydroquinate synthase activity"/>
    <property type="evidence" value="ECO:0000315"/>
    <property type="project" value="MTBBASE"/>
</dbReference>
<dbReference type="GO" id="GO:0005507">
    <property type="term" value="F:copper ion binding"/>
    <property type="evidence" value="ECO:0000314"/>
    <property type="project" value="MTBBASE"/>
</dbReference>
<dbReference type="GO" id="GO:0000166">
    <property type="term" value="F:nucleotide binding"/>
    <property type="evidence" value="ECO:0007669"/>
    <property type="project" value="UniProtKB-KW"/>
</dbReference>
<dbReference type="GO" id="GO:0008270">
    <property type="term" value="F:zinc ion binding"/>
    <property type="evidence" value="ECO:0000314"/>
    <property type="project" value="MTBBASE"/>
</dbReference>
<dbReference type="GO" id="GO:0008652">
    <property type="term" value="P:amino acid biosynthetic process"/>
    <property type="evidence" value="ECO:0007669"/>
    <property type="project" value="UniProtKB-KW"/>
</dbReference>
<dbReference type="GO" id="GO:0009073">
    <property type="term" value="P:aromatic amino acid family biosynthetic process"/>
    <property type="evidence" value="ECO:0000315"/>
    <property type="project" value="MTBBASE"/>
</dbReference>
<dbReference type="GO" id="GO:0009423">
    <property type="term" value="P:chorismate biosynthetic process"/>
    <property type="evidence" value="ECO:0000304"/>
    <property type="project" value="Reactome"/>
</dbReference>
<dbReference type="CDD" id="cd08195">
    <property type="entry name" value="DHQS"/>
    <property type="match status" value="1"/>
</dbReference>
<dbReference type="FunFam" id="1.20.1090.10:FF:000006">
    <property type="entry name" value="3-dehydroquinate synthase"/>
    <property type="match status" value="1"/>
</dbReference>
<dbReference type="FunFam" id="3.40.50.1970:FF:000012">
    <property type="entry name" value="3-dehydroquinate synthase"/>
    <property type="match status" value="1"/>
</dbReference>
<dbReference type="Gene3D" id="3.40.50.1970">
    <property type="match status" value="1"/>
</dbReference>
<dbReference type="Gene3D" id="1.20.1090.10">
    <property type="entry name" value="Dehydroquinate synthase-like - alpha domain"/>
    <property type="match status" value="1"/>
</dbReference>
<dbReference type="HAMAP" id="MF_00110">
    <property type="entry name" value="DHQ_synthase"/>
    <property type="match status" value="1"/>
</dbReference>
<dbReference type="InterPro" id="IPR050071">
    <property type="entry name" value="Dehydroquinate_synthase"/>
</dbReference>
<dbReference type="InterPro" id="IPR016037">
    <property type="entry name" value="DHQ_synth_AroB"/>
</dbReference>
<dbReference type="InterPro" id="IPR030963">
    <property type="entry name" value="DHQ_synth_fam"/>
</dbReference>
<dbReference type="InterPro" id="IPR030960">
    <property type="entry name" value="DHQS/DOIS_N"/>
</dbReference>
<dbReference type="InterPro" id="IPR056179">
    <property type="entry name" value="DHQS_C"/>
</dbReference>
<dbReference type="NCBIfam" id="TIGR01357">
    <property type="entry name" value="aroB"/>
    <property type="match status" value="1"/>
</dbReference>
<dbReference type="PANTHER" id="PTHR43622">
    <property type="entry name" value="3-DEHYDROQUINATE SYNTHASE"/>
    <property type="match status" value="1"/>
</dbReference>
<dbReference type="PANTHER" id="PTHR43622:SF7">
    <property type="entry name" value="3-DEHYDROQUINATE SYNTHASE, CHLOROPLASTIC"/>
    <property type="match status" value="1"/>
</dbReference>
<dbReference type="Pfam" id="PF01761">
    <property type="entry name" value="DHQ_synthase"/>
    <property type="match status" value="1"/>
</dbReference>
<dbReference type="Pfam" id="PF24621">
    <property type="entry name" value="DHQS_C"/>
    <property type="match status" value="1"/>
</dbReference>
<dbReference type="PIRSF" id="PIRSF001455">
    <property type="entry name" value="DHQ_synth"/>
    <property type="match status" value="1"/>
</dbReference>
<dbReference type="SUPFAM" id="SSF56796">
    <property type="entry name" value="Dehydroquinate synthase-like"/>
    <property type="match status" value="1"/>
</dbReference>